<dbReference type="EC" id="2.7.1.20"/>
<dbReference type="EMBL" id="AF128274">
    <property type="protein sequence ID" value="AAF01261.1"/>
    <property type="molecule type" value="Genomic_DNA"/>
</dbReference>
<dbReference type="EMBL" id="AF128275">
    <property type="protein sequence ID" value="AAF01262.1"/>
    <property type="molecule type" value="mRNA"/>
</dbReference>
<dbReference type="PDB" id="1DGM">
    <property type="method" value="X-ray"/>
    <property type="resolution" value="1.80 A"/>
    <property type="chains" value="A=1-363"/>
</dbReference>
<dbReference type="PDB" id="1LII">
    <property type="method" value="X-ray"/>
    <property type="resolution" value="1.73 A"/>
    <property type="chains" value="A=1-363"/>
</dbReference>
<dbReference type="PDB" id="1LIJ">
    <property type="method" value="X-ray"/>
    <property type="resolution" value="1.86 A"/>
    <property type="chains" value="A=1-363"/>
</dbReference>
<dbReference type="PDB" id="1LIK">
    <property type="method" value="X-ray"/>
    <property type="resolution" value="2.55 A"/>
    <property type="chains" value="A=1-363"/>
</dbReference>
<dbReference type="PDB" id="1LIO">
    <property type="method" value="X-ray"/>
    <property type="resolution" value="2.50 A"/>
    <property type="chains" value="A=1-363"/>
</dbReference>
<dbReference type="PDB" id="2A9Y">
    <property type="method" value="X-ray"/>
    <property type="resolution" value="1.35 A"/>
    <property type="chains" value="A=1-363"/>
</dbReference>
<dbReference type="PDB" id="2A9Z">
    <property type="method" value="X-ray"/>
    <property type="resolution" value="1.35 A"/>
    <property type="chains" value="A=1-363"/>
</dbReference>
<dbReference type="PDB" id="2AA0">
    <property type="method" value="X-ray"/>
    <property type="resolution" value="1.75 A"/>
    <property type="chains" value="A=1-363"/>
</dbReference>
<dbReference type="PDB" id="2AB8">
    <property type="method" value="X-ray"/>
    <property type="resolution" value="1.75 A"/>
    <property type="chains" value="A=1-363"/>
</dbReference>
<dbReference type="PDB" id="2ABS">
    <property type="method" value="X-ray"/>
    <property type="resolution" value="1.10 A"/>
    <property type="chains" value="A=1-363"/>
</dbReference>
<dbReference type="PDBsum" id="1DGM"/>
<dbReference type="PDBsum" id="1LII"/>
<dbReference type="PDBsum" id="1LIJ"/>
<dbReference type="PDBsum" id="1LIK"/>
<dbReference type="PDBsum" id="1LIO"/>
<dbReference type="PDBsum" id="2A9Y"/>
<dbReference type="PDBsum" id="2A9Z"/>
<dbReference type="PDBsum" id="2AA0"/>
<dbReference type="PDBsum" id="2AB8"/>
<dbReference type="PDBsum" id="2ABS"/>
<dbReference type="SMR" id="Q9TVW2"/>
<dbReference type="BindingDB" id="Q9TVW2"/>
<dbReference type="ChEMBL" id="CHEMBL2982"/>
<dbReference type="DrugCentral" id="Q9TVW2"/>
<dbReference type="EnsemblProtists" id="TGME49_250880-t26_1">
    <property type="protein sequence ID" value="TGME49_250880-t26_1"/>
    <property type="gene ID" value="TGME49_250880"/>
</dbReference>
<dbReference type="VEuPathDB" id="ToxoDB:TGARI_250880"/>
<dbReference type="VEuPathDB" id="ToxoDB:TGCAST_250880"/>
<dbReference type="VEuPathDB" id="ToxoDB:TGCOUG_250880"/>
<dbReference type="VEuPathDB" id="ToxoDB:TGDOM2_250880"/>
<dbReference type="VEuPathDB" id="ToxoDB:TGFOU_250880"/>
<dbReference type="VEuPathDB" id="ToxoDB:TGGT1_250880"/>
<dbReference type="VEuPathDB" id="ToxoDB:TGMAS_250880"/>
<dbReference type="VEuPathDB" id="ToxoDB:TGME49_250880"/>
<dbReference type="VEuPathDB" id="ToxoDB:TGP89_250880"/>
<dbReference type="VEuPathDB" id="ToxoDB:TGPRC2_250880"/>
<dbReference type="VEuPathDB" id="ToxoDB:TGRH88_064140"/>
<dbReference type="VEuPathDB" id="ToxoDB:TGRUB_250880"/>
<dbReference type="VEuPathDB" id="ToxoDB:TGVAND_250880"/>
<dbReference type="VEuPathDB" id="ToxoDB:TGVEG_250880"/>
<dbReference type="BRENDA" id="2.7.1.20">
    <property type="organism ID" value="6411"/>
</dbReference>
<dbReference type="UniPathway" id="UPA00588">
    <property type="reaction ID" value="UER00659"/>
</dbReference>
<dbReference type="EvolutionaryTrace" id="Q9TVW2"/>
<dbReference type="GO" id="GO:0005829">
    <property type="term" value="C:cytosol"/>
    <property type="evidence" value="ECO:0007669"/>
    <property type="project" value="TreeGrafter"/>
</dbReference>
<dbReference type="GO" id="GO:0005634">
    <property type="term" value="C:nucleus"/>
    <property type="evidence" value="ECO:0007669"/>
    <property type="project" value="TreeGrafter"/>
</dbReference>
<dbReference type="GO" id="GO:0004001">
    <property type="term" value="F:adenosine kinase activity"/>
    <property type="evidence" value="ECO:0007669"/>
    <property type="project" value="UniProtKB-EC"/>
</dbReference>
<dbReference type="GO" id="GO:0005524">
    <property type="term" value="F:ATP binding"/>
    <property type="evidence" value="ECO:0007669"/>
    <property type="project" value="UniProtKB-KW"/>
</dbReference>
<dbReference type="GO" id="GO:0046872">
    <property type="term" value="F:metal ion binding"/>
    <property type="evidence" value="ECO:0007669"/>
    <property type="project" value="UniProtKB-KW"/>
</dbReference>
<dbReference type="GO" id="GO:0044209">
    <property type="term" value="P:AMP salvage"/>
    <property type="evidence" value="ECO:0007669"/>
    <property type="project" value="UniProtKB-UniPathway"/>
</dbReference>
<dbReference type="GO" id="GO:0006144">
    <property type="term" value="P:purine nucleobase metabolic process"/>
    <property type="evidence" value="ECO:0007669"/>
    <property type="project" value="TreeGrafter"/>
</dbReference>
<dbReference type="GO" id="GO:0006166">
    <property type="term" value="P:purine ribonucleoside salvage"/>
    <property type="evidence" value="ECO:0007669"/>
    <property type="project" value="UniProtKB-KW"/>
</dbReference>
<dbReference type="CDD" id="cd01168">
    <property type="entry name" value="adenosine_kinase"/>
    <property type="match status" value="1"/>
</dbReference>
<dbReference type="Gene3D" id="3.30.1110.10">
    <property type="match status" value="1"/>
</dbReference>
<dbReference type="Gene3D" id="3.40.1190.20">
    <property type="match status" value="1"/>
</dbReference>
<dbReference type="InterPro" id="IPR001805">
    <property type="entry name" value="Adenokinase"/>
</dbReference>
<dbReference type="InterPro" id="IPR002173">
    <property type="entry name" value="Carboh/pur_kinase_PfkB_CS"/>
</dbReference>
<dbReference type="InterPro" id="IPR011611">
    <property type="entry name" value="PfkB_dom"/>
</dbReference>
<dbReference type="InterPro" id="IPR029056">
    <property type="entry name" value="Ribokinase-like"/>
</dbReference>
<dbReference type="PANTHER" id="PTHR45769">
    <property type="entry name" value="ADENOSINE KINASE"/>
    <property type="match status" value="1"/>
</dbReference>
<dbReference type="PANTHER" id="PTHR45769:SF3">
    <property type="entry name" value="ADENOSINE KINASE"/>
    <property type="match status" value="1"/>
</dbReference>
<dbReference type="Pfam" id="PF00294">
    <property type="entry name" value="PfkB"/>
    <property type="match status" value="1"/>
</dbReference>
<dbReference type="PRINTS" id="PR00989">
    <property type="entry name" value="ADENOKINASE"/>
</dbReference>
<dbReference type="SUPFAM" id="SSF53613">
    <property type="entry name" value="Ribokinase-like"/>
    <property type="match status" value="1"/>
</dbReference>
<dbReference type="PROSITE" id="PS00584">
    <property type="entry name" value="PFKB_KINASES_2"/>
    <property type="match status" value="1"/>
</dbReference>
<sequence>MAVDSSNSATGPMRVFAIGNPILDLVAEVPSSFLDEFFLKRGDATLATPEQMRIYSTLDQFNPTSLPGGSALNSVRVVQKLLRKPGSAGYMGAIGDDPRGQVLKELCDKEGLATRFMVAPGQSTGVCAVLINEKERTLCTHLGACGSFRLPEDWTTFASGALIFYATAYTLTATPKNALEVAGYAHGIPNAIFTLNLSAPFCVELYKDAMQSLLLHTNILFGNEEEFAHLAKVHNLVAAEKTALSTANKEHAVEVCTGALRLLTAGQNTGATKLVVMTRGHNPVIAAEQTADGTVVVHEVGVPVVAAEKIVDTNGAGDAFVGGFLYALSQGKTVKQCIMCGNACAQDVIQHVGFSLSFTSLPC</sequence>
<accession>Q9TVW2</accession>
<organism>
    <name type="scientific">Toxoplasma gondii</name>
    <dbReference type="NCBI Taxonomy" id="5811"/>
    <lineage>
        <taxon>Eukaryota</taxon>
        <taxon>Sar</taxon>
        <taxon>Alveolata</taxon>
        <taxon>Apicomplexa</taxon>
        <taxon>Conoidasida</taxon>
        <taxon>Coccidia</taxon>
        <taxon>Eucoccidiorida</taxon>
        <taxon>Eimeriorina</taxon>
        <taxon>Sarcocystidae</taxon>
        <taxon>Toxoplasma</taxon>
    </lineage>
</organism>
<protein>
    <recommendedName>
        <fullName>Adenosine kinase</fullName>
        <shortName>AK</shortName>
        <ecNumber>2.7.1.20</ecNumber>
    </recommendedName>
    <alternativeName>
        <fullName>Adenosine 5'-phosphotransferase</fullName>
    </alternativeName>
</protein>
<proteinExistence type="evidence at protein level"/>
<name>ADK_TOXGO</name>
<reference key="1">
    <citation type="journal article" date="1999" name="Mol. Biochem. Parasitol.">
        <title>Insertional tagging of at least two loci associated with resistance to adenine arabinoside in Toxoplasma gondii, and cloning of the adenosine kinase locus.</title>
        <authorList>
            <person name="Sullivan W.J. Jr."/>
            <person name="Chiang C.-W."/>
            <person name="Wilson C.M."/>
            <person name="Naguib F.N.M."/>
            <person name="el Kouni M.H."/>
            <person name="Donald R.G.K."/>
            <person name="Roos D.S."/>
        </authorList>
    </citation>
    <scope>NUCLEOTIDE SEQUENCE [GENOMIC DNA / MRNA]</scope>
    <source>
        <strain>RH</strain>
    </source>
</reference>
<reference key="2">
    <citation type="journal article" date="2000" name="J. Mol. Biol.">
        <title>Crystal structures of Toxoplasma gondii adenosine kinase reveal a novel catalytic mechanism and prodrug binding.</title>
        <authorList>
            <person name="Schumacher M.A."/>
            <person name="Scott D.M."/>
            <person name="Mathews I.I."/>
            <person name="Ealick S.E."/>
            <person name="Roos D.S."/>
            <person name="Ullman B."/>
            <person name="Brennan R.G."/>
        </authorList>
    </citation>
    <scope>X-RAY CRYSTALLOGRAPHY (1.72 ANGSTROMS)</scope>
</reference>
<reference key="3">
    <citation type="journal article" date="2000" name="Protein Sci.">
        <title>Crystal structure of adenosine kinase from Toxoplasma gondii at 1.8 A resolution.</title>
        <authorList>
            <person name="Cook W.J."/>
            <person name="DeLucas L.J."/>
            <person name="Chattopadhyay D."/>
        </authorList>
    </citation>
    <scope>X-RAY CRYSTALLOGRAPHY (1.8 ANGSTROMS)</scope>
</reference>
<keyword id="KW-0002">3D-structure</keyword>
<keyword id="KW-0067">ATP-binding</keyword>
<keyword id="KW-0418">Kinase</keyword>
<keyword id="KW-0460">Magnesium</keyword>
<keyword id="KW-0479">Metal-binding</keyword>
<keyword id="KW-0547">Nucleotide-binding</keyword>
<keyword id="KW-0660">Purine salvage</keyword>
<keyword id="KW-0808">Transferase</keyword>
<feature type="chain" id="PRO_0000080056" description="Adenosine kinase">
    <location>
        <begin position="1"/>
        <end position="363"/>
    </location>
</feature>
<feature type="active site">
    <location>
        <position position="318"/>
    </location>
</feature>
<feature type="binding site">
    <location>
        <position position="185"/>
    </location>
    <ligand>
        <name>Mg(2+)</name>
        <dbReference type="ChEBI" id="CHEBI:18420"/>
    </ligand>
</feature>
<feature type="binding site">
    <location>
        <position position="188"/>
    </location>
    <ligand>
        <name>Mg(2+)</name>
        <dbReference type="ChEBI" id="CHEBI:18420"/>
    </ligand>
</feature>
<feature type="binding site">
    <location>
        <position position="191"/>
    </location>
    <ligand>
        <name>Mg(2+)</name>
        <dbReference type="ChEBI" id="CHEBI:18420"/>
    </ligand>
</feature>
<feature type="strand" evidence="4">
    <location>
        <begin position="15"/>
        <end position="18"/>
    </location>
</feature>
<feature type="strand" evidence="4">
    <location>
        <begin position="22"/>
        <end position="28"/>
    </location>
</feature>
<feature type="helix" evidence="4">
    <location>
        <begin position="31"/>
        <end position="36"/>
    </location>
</feature>
<feature type="strand" evidence="4">
    <location>
        <begin position="44"/>
        <end position="46"/>
    </location>
</feature>
<feature type="helix" evidence="4">
    <location>
        <begin position="49"/>
        <end position="56"/>
    </location>
</feature>
<feature type="helix" evidence="4">
    <location>
        <begin position="58"/>
        <end position="61"/>
    </location>
</feature>
<feature type="strand" evidence="4">
    <location>
        <begin position="64"/>
        <end position="69"/>
    </location>
</feature>
<feature type="helix" evidence="4">
    <location>
        <begin position="70"/>
        <end position="82"/>
    </location>
</feature>
<feature type="strand" evidence="4">
    <location>
        <begin position="87"/>
        <end position="94"/>
    </location>
</feature>
<feature type="helix" evidence="4">
    <location>
        <begin position="98"/>
        <end position="110"/>
    </location>
</feature>
<feature type="strand" evidence="4">
    <location>
        <begin position="113"/>
        <end position="118"/>
    </location>
</feature>
<feature type="strand" evidence="4">
    <location>
        <begin position="125"/>
        <end position="132"/>
    </location>
</feature>
<feature type="strand" evidence="4">
    <location>
        <begin position="135"/>
        <end position="141"/>
    </location>
</feature>
<feature type="helix" evidence="4">
    <location>
        <begin position="143"/>
        <end position="147"/>
    </location>
</feature>
<feature type="helix" evidence="4">
    <location>
        <begin position="154"/>
        <end position="157"/>
    </location>
</feature>
<feature type="turn" evidence="4">
    <location>
        <begin position="158"/>
        <end position="160"/>
    </location>
</feature>
<feature type="strand" evidence="4">
    <location>
        <begin position="163"/>
        <end position="167"/>
    </location>
</feature>
<feature type="helix" evidence="4">
    <location>
        <begin position="168"/>
        <end position="171"/>
    </location>
</feature>
<feature type="helix" evidence="4">
    <location>
        <begin position="176"/>
        <end position="186"/>
    </location>
</feature>
<feature type="strand" evidence="2">
    <location>
        <begin position="188"/>
        <end position="190"/>
    </location>
</feature>
<feature type="strand" evidence="4">
    <location>
        <begin position="192"/>
        <end position="196"/>
    </location>
</feature>
<feature type="helix" evidence="4">
    <location>
        <begin position="200"/>
        <end position="205"/>
    </location>
</feature>
<feature type="helix" evidence="4">
    <location>
        <begin position="207"/>
        <end position="215"/>
    </location>
</feature>
<feature type="strand" evidence="4">
    <location>
        <begin position="218"/>
        <end position="223"/>
    </location>
</feature>
<feature type="helix" evidence="4">
    <location>
        <begin position="224"/>
        <end position="234"/>
    </location>
</feature>
<feature type="helix" evidence="3">
    <location>
        <begin position="239"/>
        <end position="241"/>
    </location>
</feature>
<feature type="helix" evidence="4">
    <location>
        <begin position="249"/>
        <end position="264"/>
    </location>
</feature>
<feature type="strand" evidence="4">
    <location>
        <begin position="274"/>
        <end position="278"/>
    </location>
</feature>
<feature type="strand" evidence="4">
    <location>
        <begin position="284"/>
        <end position="289"/>
    </location>
</feature>
<feature type="turn" evidence="2">
    <location>
        <begin position="291"/>
        <end position="293"/>
    </location>
</feature>
<feature type="strand" evidence="4">
    <location>
        <begin position="295"/>
        <end position="300"/>
    </location>
</feature>
<feature type="helix" evidence="4">
    <location>
        <begin position="307"/>
        <end position="309"/>
    </location>
</feature>
<feature type="helix" evidence="4">
    <location>
        <begin position="316"/>
        <end position="329"/>
    </location>
</feature>
<feature type="helix" evidence="4">
    <location>
        <begin position="334"/>
        <end position="349"/>
    </location>
</feature>
<feature type="strand" evidence="4">
    <location>
        <begin position="351"/>
        <end position="353"/>
    </location>
</feature>
<gene>
    <name type="primary">AK</name>
</gene>
<comment type="function">
    <text>ATP-dependent phosphorylation of adenosine and other related nucleoside analogs to monophosphate derivatives. It is a key purine metabolic enzyme in the opportunistic parasitic protozoan toxoplasma gondii as it cannot synthesize purines de novo.</text>
</comment>
<comment type="catalytic activity">
    <reaction>
        <text>adenosine + ATP = AMP + ADP + H(+)</text>
        <dbReference type="Rhea" id="RHEA:20824"/>
        <dbReference type="ChEBI" id="CHEBI:15378"/>
        <dbReference type="ChEBI" id="CHEBI:16335"/>
        <dbReference type="ChEBI" id="CHEBI:30616"/>
        <dbReference type="ChEBI" id="CHEBI:456215"/>
        <dbReference type="ChEBI" id="CHEBI:456216"/>
        <dbReference type="EC" id="2.7.1.20"/>
    </reaction>
</comment>
<comment type="cofactor">
    <cofactor>
        <name>Mg(2+)</name>
        <dbReference type="ChEBI" id="CHEBI:18420"/>
    </cofactor>
    <text>Binds 1 Mg(2+) ion per subunit.</text>
</comment>
<comment type="pathway">
    <text>Purine metabolism; AMP biosynthesis via salvage pathway; AMP from adenosine: step 1/1.</text>
</comment>
<comment type="similarity">
    <text evidence="1">Belongs to the carbohydrate kinase PfkB family.</text>
</comment>
<evidence type="ECO:0000305" key="1"/>
<evidence type="ECO:0007829" key="2">
    <source>
        <dbReference type="PDB" id="1LIO"/>
    </source>
</evidence>
<evidence type="ECO:0007829" key="3">
    <source>
        <dbReference type="PDB" id="2A9Y"/>
    </source>
</evidence>
<evidence type="ECO:0007829" key="4">
    <source>
        <dbReference type="PDB" id="2ABS"/>
    </source>
</evidence>